<evidence type="ECO:0000255" key="1">
    <source>
        <dbReference type="HAMAP-Rule" id="MF_01178"/>
    </source>
</evidence>
<name>CRL_SHIB3</name>
<proteinExistence type="inferred from homology"/>
<organism>
    <name type="scientific">Shigella boydii serotype 18 (strain CDC 3083-94 / BS512)</name>
    <dbReference type="NCBI Taxonomy" id="344609"/>
    <lineage>
        <taxon>Bacteria</taxon>
        <taxon>Pseudomonadati</taxon>
        <taxon>Pseudomonadota</taxon>
        <taxon>Gammaproteobacteria</taxon>
        <taxon>Enterobacterales</taxon>
        <taxon>Enterobacteriaceae</taxon>
        <taxon>Shigella</taxon>
    </lineage>
</organism>
<sequence>MTLPSGHPKSRLIKKFTALGPYIREGKCEDNRFFFDCLAVCVNVKPAPEVREFWGWWMELEAQESRFTYSYQFGLFDKAGDWKSVPVKDTEVVERLEHTLREFHEKLRELLTTLNLKLEPADDFRDEPVKLTA</sequence>
<protein>
    <recommendedName>
        <fullName evidence="1">Sigma factor-binding protein Crl</fullName>
    </recommendedName>
</protein>
<comment type="function">
    <text evidence="1">Binds to the sigma-S subunit of RNA polymerase, activating expression of sigma-S-regulated genes. Stimulates RNA polymerase holoenzyme formation and may bind to several other sigma factors, such as sigma-70 and sigma-32.</text>
</comment>
<comment type="subcellular location">
    <subcellularLocation>
        <location evidence="1">Cytoplasm</location>
    </subcellularLocation>
</comment>
<comment type="similarity">
    <text evidence="1">Belongs to the Crl family.</text>
</comment>
<feature type="chain" id="PRO_1000138151" description="Sigma factor-binding protein Crl">
    <location>
        <begin position="1"/>
        <end position="133"/>
    </location>
</feature>
<feature type="region of interest" description="Essential for activity" evidence="1">
    <location>
        <begin position="99"/>
        <end position="122"/>
    </location>
</feature>
<feature type="coiled-coil region" evidence="1">
    <location>
        <begin position="90"/>
        <end position="116"/>
    </location>
</feature>
<reference key="1">
    <citation type="submission" date="2008-05" db="EMBL/GenBank/DDBJ databases">
        <title>Complete sequence of Shigella boydii serotype 18 strain BS512.</title>
        <authorList>
            <person name="Rasko D.A."/>
            <person name="Rosovitz M."/>
            <person name="Maurelli A.T."/>
            <person name="Myers G."/>
            <person name="Seshadri R."/>
            <person name="Cer R."/>
            <person name="Jiang L."/>
            <person name="Ravel J."/>
            <person name="Sebastian Y."/>
        </authorList>
    </citation>
    <scope>NUCLEOTIDE SEQUENCE [LARGE SCALE GENOMIC DNA]</scope>
    <source>
        <strain>CDC 3083-94 / BS512</strain>
    </source>
</reference>
<gene>
    <name evidence="1" type="primary">crl</name>
    <name type="ordered locus">SbBS512_E0237</name>
</gene>
<keyword id="KW-0010">Activator</keyword>
<keyword id="KW-0175">Coiled coil</keyword>
<keyword id="KW-0963">Cytoplasm</keyword>
<keyword id="KW-1185">Reference proteome</keyword>
<keyword id="KW-0804">Transcription</keyword>
<keyword id="KW-0805">Transcription regulation</keyword>
<dbReference type="EMBL" id="CP001063">
    <property type="protein sequence ID" value="ACD09553.1"/>
    <property type="molecule type" value="Genomic_DNA"/>
</dbReference>
<dbReference type="RefSeq" id="WP_000174677.1">
    <property type="nucleotide sequence ID" value="NC_010658.1"/>
</dbReference>
<dbReference type="SMR" id="B2U3T1"/>
<dbReference type="STRING" id="344609.SbBS512_E0237"/>
<dbReference type="GeneID" id="93777153"/>
<dbReference type="KEGG" id="sbc:SbBS512_E0237"/>
<dbReference type="HOGENOM" id="CLU_136773_0_0_6"/>
<dbReference type="Proteomes" id="UP000001030">
    <property type="component" value="Chromosome"/>
</dbReference>
<dbReference type="GO" id="GO:0005737">
    <property type="term" value="C:cytoplasm"/>
    <property type="evidence" value="ECO:0007669"/>
    <property type="project" value="UniProtKB-SubCell"/>
</dbReference>
<dbReference type="GO" id="GO:0045893">
    <property type="term" value="P:positive regulation of DNA-templated transcription"/>
    <property type="evidence" value="ECO:0007669"/>
    <property type="project" value="UniProtKB-UniRule"/>
</dbReference>
<dbReference type="FunFam" id="3.30.310.230:FF:000001">
    <property type="entry name" value="Sigma factor-binding protein Crl"/>
    <property type="match status" value="1"/>
</dbReference>
<dbReference type="Gene3D" id="3.30.310.230">
    <property type="entry name" value="Sigma factor-binding protein Crl monomer"/>
    <property type="match status" value="1"/>
</dbReference>
<dbReference type="HAMAP" id="MF_01178">
    <property type="entry name" value="Crl"/>
    <property type="match status" value="1"/>
</dbReference>
<dbReference type="InterPro" id="IPR009986">
    <property type="entry name" value="Tscrpt_reg_Crl"/>
</dbReference>
<dbReference type="InterPro" id="IPR038208">
    <property type="entry name" value="Tscrpt_reg_Crl_sf"/>
</dbReference>
<dbReference type="NCBIfam" id="NF008217">
    <property type="entry name" value="PRK10984.1"/>
    <property type="match status" value="1"/>
</dbReference>
<dbReference type="Pfam" id="PF07417">
    <property type="entry name" value="Crl"/>
    <property type="match status" value="1"/>
</dbReference>
<accession>B2U3T1</accession>